<comment type="function">
    <text evidence="3 6">Catalyzes the oxidative deamination of positively charged L-amino acids L-Lys and L-Arg but not of amino acids L-His, L-Asp or L-Glu. Has antibacterial activity against the Gram-positive bacterium S.aureus (MIC=15 ug/ml). This antibacterial activity is bacteriostatic in the absence of amino acids L-Lys or L-Arg but bactericidal in their presence. The antibacterial effect is largely dependent on H(2)O(2) produced in the oxidative deamination of substrates. Has hemagglutinating activity towards rabbit erythrocytes. Hemagglutinating activity is inhibited by the glycoprotein fetuin, but not by glucose, mannose, galactose, N-acetylglucosamine, N-acetylgalactosamine or sialic acid.</text>
</comment>
<comment type="catalytic activity">
    <reaction evidence="6">
        <text>an L-alpha-amino acid + O2 + H2O = a 2-oxocarboxylate + H2O2 + NH4(+)</text>
        <dbReference type="Rhea" id="RHEA:13781"/>
        <dbReference type="ChEBI" id="CHEBI:15377"/>
        <dbReference type="ChEBI" id="CHEBI:15379"/>
        <dbReference type="ChEBI" id="CHEBI:16240"/>
        <dbReference type="ChEBI" id="CHEBI:28938"/>
        <dbReference type="ChEBI" id="CHEBI:35179"/>
        <dbReference type="ChEBI" id="CHEBI:59869"/>
        <dbReference type="EC" id="1.4.3.2"/>
    </reaction>
</comment>
<comment type="cofactor">
    <cofactor evidence="10">
        <name>FAD</name>
        <dbReference type="ChEBI" id="CHEBI:57692"/>
    </cofactor>
</comment>
<comment type="biophysicochemical properties">
    <kinetics>
        <KM evidence="6">0.22 mM for L-Lys</KM>
        <KM evidence="6">0.015 mM for L-Arg</KM>
    </kinetics>
    <phDependence>
        <text evidence="6">Optimum pH is 8. More than 50% activity is retained between pH 3 and 12. Inactive at pH 2.</text>
    </phDependence>
    <temperatureDependence>
        <text evidence="6">Activity remains stable after 30 minutes at 55 degrees Celsius.</text>
    </temperatureDependence>
</comment>
<comment type="subunit">
    <text evidence="3">Monomer.</text>
</comment>
<comment type="subcellular location">
    <subcellularLocation>
        <location evidence="3 5 6">Secreted</location>
    </subcellularLocation>
</comment>
<comment type="tissue specificity">
    <text evidence="5">Expressed by the ink gland.</text>
</comment>
<comment type="PTM">
    <text evidence="3 4">Not glycosylated.</text>
</comment>
<comment type="similarity">
    <text evidence="2">Belongs to the flavin monoamine oxidase family.</text>
</comment>
<feature type="chain" id="PRO_0000413471" description="L-amino-acid oxidase">
    <location>
        <begin position="1"/>
        <end position="26" status="greater than"/>
    </location>
</feature>
<feature type="non-terminal residue" evidence="8">
    <location>
        <position position="26"/>
    </location>
</feature>
<organism>
    <name type="scientific">Aplysia dactylomela</name>
    <name type="common">Spotted sea hare</name>
    <dbReference type="NCBI Taxonomy" id="144766"/>
    <lineage>
        <taxon>Eukaryota</taxon>
        <taxon>Metazoa</taxon>
        <taxon>Spiralia</taxon>
        <taxon>Lophotrochozoa</taxon>
        <taxon>Mollusca</taxon>
        <taxon>Gastropoda</taxon>
        <taxon>Heterobranchia</taxon>
        <taxon>Euthyneura</taxon>
        <taxon>Tectipleura</taxon>
        <taxon>Aplysiida</taxon>
        <taxon>Aplysioidea</taxon>
        <taxon>Aplysiidae</taxon>
        <taxon>Aplysia</taxon>
    </lineage>
</organism>
<sequence length="26" mass="2731">DGVCSNRRQCNKEVCGSSYDVAIVGA</sequence>
<reference evidence="9" key="1">
    <citation type="journal article" date="2011" name="J. Exp. Mar. Biol. Ecol.">
        <title>Further characterization and mode of action of dactylomelin-P, an antibacterial protein isolated from the ink of the sea hare Aplysia dactylomela (Rang, 1828).</title>
        <authorList>
            <person name="Tavares T.C.L."/>
            <person name="Nogueira V.L.R."/>
            <person name="Vasconcelos I.M."/>
            <person name="Gomes V.M."/>
            <person name="da Cunha M."/>
            <person name="Carvalho A.F.U."/>
            <person name="Melo V.M.M."/>
        </authorList>
    </citation>
    <scope>PROTEIN SEQUENCE</scope>
    <scope>FUNCTION</scope>
    <scope>CATALYTIC ACTIVITY</scope>
    <scope>BIOPHYSICOCHEMICAL PROPERTIES</scope>
    <scope>SUBCELLULAR LOCATION</scope>
    <source>
        <tissue evidence="6">Ink</tissue>
    </source>
</reference>
<reference evidence="9" key="2">
    <citation type="journal article" date="2000" name="Toxicon">
        <title>Purification of a novel antibacterial and haemagglutinating protein from the purple gland of the sea hare, Aplysia dactylomela rang, 1828.</title>
        <authorList>
            <person name="Melo V.M.M."/>
            <person name="Duarte A.B.G."/>
            <person name="Carvalho A.F.F.U."/>
            <person name="Siebra E.A."/>
            <person name="Vasconcelos I.M."/>
        </authorList>
    </citation>
    <scope>FUNCTION</scope>
    <scope>SUBUNIT</scope>
    <scope>SUBCELLULAR LOCATION</scope>
    <scope>LACK OF GLYCOSYLATION</scope>
    <source>
        <tissue evidence="3">Ink</tissue>
    </source>
</reference>
<reference evidence="9" key="3">
    <citation type="journal article" date="2005" name="J. Exp. Biol.">
        <title>Cloning, characterization and expression of escapin, a broadly antimicrobial FAD-containing L-amino acid oxidase from ink of the sea hare Aplysia californica.</title>
        <authorList>
            <person name="Yang H."/>
            <person name="Johnson P.M."/>
            <person name="Ko K.C."/>
            <person name="Kamio M."/>
            <person name="Germann M.W."/>
            <person name="Derby C.D."/>
            <person name="Tai P.C."/>
        </authorList>
    </citation>
    <scope>LACK OF GLYCOSYLATION</scope>
</reference>
<reference evidence="9" key="4">
    <citation type="journal article" date="2006" name="J. Exp. Biol.">
        <title>Packaging of chemicals in the defensive secretory glands of the sea hare Aplysia californica.</title>
        <authorList>
            <person name="Johnson P.M."/>
            <person name="Kicklighter C.E."/>
            <person name="Schmidt M."/>
            <person name="Kamio M."/>
            <person name="Yang H."/>
            <person name="Elkin D."/>
            <person name="Michel W.C."/>
            <person name="Tai P.C."/>
            <person name="Derby C.D."/>
        </authorList>
    </citation>
    <scope>SUBCELLULAR LOCATION</scope>
    <scope>TISSUE SPECIFICITY</scope>
    <source>
        <tissue evidence="5">Ink</tissue>
    </source>
</reference>
<name>OXLA_APLDA</name>
<protein>
    <recommendedName>
        <fullName evidence="1">L-amino-acid oxidase</fullName>
        <shortName evidence="1">LAAO</shortName>
        <shortName evidence="1">LAO</shortName>
        <ecNumber evidence="6">1.4.3.2</ecNumber>
    </recommendedName>
    <alternativeName>
        <fullName evidence="7">Dactylomelin-P</fullName>
    </alternativeName>
</protein>
<accession>P86163</accession>
<keyword id="KW-0044">Antibiotic</keyword>
<keyword id="KW-0929">Antimicrobial</keyword>
<keyword id="KW-0903">Direct protein sequencing</keyword>
<keyword id="KW-0274">FAD</keyword>
<keyword id="KW-0285">Flavoprotein</keyword>
<keyword id="KW-0348">Hemagglutinin</keyword>
<keyword id="KW-0560">Oxidoreductase</keyword>
<keyword id="KW-0964">Secreted</keyword>
<keyword id="KW-0800">Toxin</keyword>
<evidence type="ECO:0000250" key="1">
    <source>
        <dbReference type="UniProtKB" id="P81383"/>
    </source>
</evidence>
<evidence type="ECO:0000255" key="2"/>
<evidence type="ECO:0000269" key="3">
    <source>
    </source>
</evidence>
<evidence type="ECO:0000269" key="4">
    <source>
    </source>
</evidence>
<evidence type="ECO:0000269" key="5">
    <source>
    </source>
</evidence>
<evidence type="ECO:0000269" key="6">
    <source ref="1"/>
</evidence>
<evidence type="ECO:0000303" key="7">
    <source>
    </source>
</evidence>
<evidence type="ECO:0000303" key="8">
    <source ref="1"/>
</evidence>
<evidence type="ECO:0000305" key="9"/>
<evidence type="ECO:0000305" key="10">
    <source ref="1"/>
</evidence>
<dbReference type="EC" id="1.4.3.2" evidence="6"/>
<dbReference type="GO" id="GO:0005576">
    <property type="term" value="C:extracellular region"/>
    <property type="evidence" value="ECO:0000314"/>
    <property type="project" value="UniProtKB"/>
</dbReference>
<dbReference type="GO" id="GO:0001716">
    <property type="term" value="F:L-amino-acid oxidase activity"/>
    <property type="evidence" value="ECO:0000314"/>
    <property type="project" value="UniProtKB"/>
</dbReference>
<dbReference type="GO" id="GO:0090729">
    <property type="term" value="F:toxin activity"/>
    <property type="evidence" value="ECO:0007669"/>
    <property type="project" value="UniProtKB-KW"/>
</dbReference>
<dbReference type="GO" id="GO:0042742">
    <property type="term" value="P:defense response to bacterium"/>
    <property type="evidence" value="ECO:0000314"/>
    <property type="project" value="UniProtKB"/>
</dbReference>
<proteinExistence type="evidence at protein level"/>